<protein>
    <recommendedName>
        <fullName evidence="6">ABC transporter aclQ</fullName>
    </recommendedName>
    <alternativeName>
        <fullName evidence="6">Aspirochlorine biosynthesis protein Q</fullName>
    </alternativeName>
</protein>
<dbReference type="EMBL" id="BA000050">
    <property type="protein sequence ID" value="BAE56595.1"/>
    <property type="molecule type" value="Genomic_DNA"/>
</dbReference>
<dbReference type="RefSeq" id="XP_001818597.1">
    <property type="nucleotide sequence ID" value="XM_001818545.1"/>
</dbReference>
<dbReference type="SMR" id="Q2UPC0"/>
<dbReference type="GlyCosmos" id="Q2UPC0">
    <property type="glycosylation" value="3 sites, No reported glycans"/>
</dbReference>
<dbReference type="EnsemblFungi" id="BAE56595">
    <property type="protein sequence ID" value="BAE56595"/>
    <property type="gene ID" value="AO090001000032"/>
</dbReference>
<dbReference type="GeneID" id="5990568"/>
<dbReference type="KEGG" id="aor:AO090001000032"/>
<dbReference type="VEuPathDB" id="FungiDB:AO090001000032"/>
<dbReference type="HOGENOM" id="CLU_000604_6_5_1"/>
<dbReference type="OMA" id="VTIYMAK"/>
<dbReference type="OrthoDB" id="59031at5052"/>
<dbReference type="Proteomes" id="UP000006564">
    <property type="component" value="Chromosome 2"/>
</dbReference>
<dbReference type="GO" id="GO:0005774">
    <property type="term" value="C:vacuolar membrane"/>
    <property type="evidence" value="ECO:0007669"/>
    <property type="project" value="TreeGrafter"/>
</dbReference>
<dbReference type="GO" id="GO:0140359">
    <property type="term" value="F:ABC-type transporter activity"/>
    <property type="evidence" value="ECO:0007669"/>
    <property type="project" value="InterPro"/>
</dbReference>
<dbReference type="GO" id="GO:0005524">
    <property type="term" value="F:ATP binding"/>
    <property type="evidence" value="ECO:0007669"/>
    <property type="project" value="UniProtKB-KW"/>
</dbReference>
<dbReference type="GO" id="GO:0016887">
    <property type="term" value="F:ATP hydrolysis activity"/>
    <property type="evidence" value="ECO:0007669"/>
    <property type="project" value="InterPro"/>
</dbReference>
<dbReference type="CDD" id="cd18583">
    <property type="entry name" value="ABC_6TM_HMT1"/>
    <property type="match status" value="1"/>
</dbReference>
<dbReference type="CDD" id="cd03253">
    <property type="entry name" value="ABCC_ATM1_transporter"/>
    <property type="match status" value="1"/>
</dbReference>
<dbReference type="FunFam" id="3.40.50.300:FF:000186">
    <property type="entry name" value="ATP-binding cassette sub-family B member 7, mitochondrial"/>
    <property type="match status" value="1"/>
</dbReference>
<dbReference type="Gene3D" id="1.20.1560.10">
    <property type="entry name" value="ABC transporter type 1, transmembrane domain"/>
    <property type="match status" value="1"/>
</dbReference>
<dbReference type="Gene3D" id="3.40.50.300">
    <property type="entry name" value="P-loop containing nucleotide triphosphate hydrolases"/>
    <property type="match status" value="1"/>
</dbReference>
<dbReference type="InterPro" id="IPR003593">
    <property type="entry name" value="AAA+_ATPase"/>
</dbReference>
<dbReference type="InterPro" id="IPR011527">
    <property type="entry name" value="ABC1_TM_dom"/>
</dbReference>
<dbReference type="InterPro" id="IPR036640">
    <property type="entry name" value="ABC1_TM_sf"/>
</dbReference>
<dbReference type="InterPro" id="IPR003439">
    <property type="entry name" value="ABC_transporter-like_ATP-bd"/>
</dbReference>
<dbReference type="InterPro" id="IPR017871">
    <property type="entry name" value="ABC_transporter-like_CS"/>
</dbReference>
<dbReference type="InterPro" id="IPR027417">
    <property type="entry name" value="P-loop_NTPase"/>
</dbReference>
<dbReference type="InterPro" id="IPR039421">
    <property type="entry name" value="Type_1_exporter"/>
</dbReference>
<dbReference type="PANTHER" id="PTHR24221">
    <property type="entry name" value="ATP-BINDING CASSETTE SUB-FAMILY B"/>
    <property type="match status" value="1"/>
</dbReference>
<dbReference type="PANTHER" id="PTHR24221:SF651">
    <property type="entry name" value="HEAVY METAL TOLERANCE PROTEIN"/>
    <property type="match status" value="1"/>
</dbReference>
<dbReference type="Pfam" id="PF00664">
    <property type="entry name" value="ABC_membrane"/>
    <property type="match status" value="1"/>
</dbReference>
<dbReference type="Pfam" id="PF00005">
    <property type="entry name" value="ABC_tran"/>
    <property type="match status" value="1"/>
</dbReference>
<dbReference type="SMART" id="SM00382">
    <property type="entry name" value="AAA"/>
    <property type="match status" value="1"/>
</dbReference>
<dbReference type="SUPFAM" id="SSF90123">
    <property type="entry name" value="ABC transporter transmembrane region"/>
    <property type="match status" value="1"/>
</dbReference>
<dbReference type="SUPFAM" id="SSF52540">
    <property type="entry name" value="P-loop containing nucleoside triphosphate hydrolases"/>
    <property type="match status" value="1"/>
</dbReference>
<dbReference type="PROSITE" id="PS50929">
    <property type="entry name" value="ABC_TM1F"/>
    <property type="match status" value="1"/>
</dbReference>
<dbReference type="PROSITE" id="PS00211">
    <property type="entry name" value="ABC_TRANSPORTER_1"/>
    <property type="match status" value="1"/>
</dbReference>
<dbReference type="PROSITE" id="PS50893">
    <property type="entry name" value="ABC_TRANSPORTER_2"/>
    <property type="match status" value="1"/>
</dbReference>
<keyword id="KW-0067">ATP-binding</keyword>
<keyword id="KW-0325">Glycoprotein</keyword>
<keyword id="KW-0472">Membrane</keyword>
<keyword id="KW-0547">Nucleotide-binding</keyword>
<keyword id="KW-1185">Reference proteome</keyword>
<keyword id="KW-0812">Transmembrane</keyword>
<keyword id="KW-1133">Transmembrane helix</keyword>
<keyword id="KW-0813">Transport</keyword>
<organism>
    <name type="scientific">Aspergillus oryzae (strain ATCC 42149 / RIB 40)</name>
    <name type="common">Yellow koji mold</name>
    <dbReference type="NCBI Taxonomy" id="510516"/>
    <lineage>
        <taxon>Eukaryota</taxon>
        <taxon>Fungi</taxon>
        <taxon>Dikarya</taxon>
        <taxon>Ascomycota</taxon>
        <taxon>Pezizomycotina</taxon>
        <taxon>Eurotiomycetes</taxon>
        <taxon>Eurotiomycetidae</taxon>
        <taxon>Eurotiales</taxon>
        <taxon>Aspergillaceae</taxon>
        <taxon>Aspergillus</taxon>
        <taxon>Aspergillus subgen. Circumdati</taxon>
    </lineage>
</organism>
<accession>Q2UPC0</accession>
<name>ACLQ_ASPOR</name>
<reference key="1">
    <citation type="journal article" date="2005" name="Nature">
        <title>Genome sequencing and analysis of Aspergillus oryzae.</title>
        <authorList>
            <person name="Machida M."/>
            <person name="Asai K."/>
            <person name="Sano M."/>
            <person name="Tanaka T."/>
            <person name="Kumagai T."/>
            <person name="Terai G."/>
            <person name="Kusumoto K."/>
            <person name="Arima T."/>
            <person name="Akita O."/>
            <person name="Kashiwagi Y."/>
            <person name="Abe K."/>
            <person name="Gomi K."/>
            <person name="Horiuchi H."/>
            <person name="Kitamoto K."/>
            <person name="Kobayashi T."/>
            <person name="Takeuchi M."/>
            <person name="Denning D.W."/>
            <person name="Galagan J.E."/>
            <person name="Nierman W.C."/>
            <person name="Yu J."/>
            <person name="Archer D.B."/>
            <person name="Bennett J.W."/>
            <person name="Bhatnagar D."/>
            <person name="Cleveland T.E."/>
            <person name="Fedorova N.D."/>
            <person name="Gotoh O."/>
            <person name="Horikawa H."/>
            <person name="Hosoyama A."/>
            <person name="Ichinomiya M."/>
            <person name="Igarashi R."/>
            <person name="Iwashita K."/>
            <person name="Juvvadi P.R."/>
            <person name="Kato M."/>
            <person name="Kato Y."/>
            <person name="Kin T."/>
            <person name="Kokubun A."/>
            <person name="Maeda H."/>
            <person name="Maeyama N."/>
            <person name="Maruyama J."/>
            <person name="Nagasaki H."/>
            <person name="Nakajima T."/>
            <person name="Oda K."/>
            <person name="Okada K."/>
            <person name="Paulsen I."/>
            <person name="Sakamoto K."/>
            <person name="Sawano T."/>
            <person name="Takahashi M."/>
            <person name="Takase K."/>
            <person name="Terabayashi Y."/>
            <person name="Wortman J.R."/>
            <person name="Yamada O."/>
            <person name="Yamagata Y."/>
            <person name="Anazawa H."/>
            <person name="Hata Y."/>
            <person name="Koide Y."/>
            <person name="Komori T."/>
            <person name="Koyama Y."/>
            <person name="Minetoki T."/>
            <person name="Suharnan S."/>
            <person name="Tanaka A."/>
            <person name="Isono K."/>
            <person name="Kuhara S."/>
            <person name="Ogasawara N."/>
            <person name="Kikuchi H."/>
        </authorList>
    </citation>
    <scope>NUCLEOTIDE SEQUENCE [LARGE SCALE GENOMIC DNA]</scope>
    <source>
        <strain>ATCC 42149 / RIB 40</strain>
    </source>
</reference>
<reference key="2">
    <citation type="journal article" date="2014" name="Angew. Chem. Int. Ed.">
        <title>Biosynthesis of the halogenated mycotoxin aspirochlorine in koji mold involves a cryptic amino acid conversion.</title>
        <authorList>
            <person name="Chankhamjon P."/>
            <person name="Boettger-Schmidt D."/>
            <person name="Scherlach K."/>
            <person name="Urbansky B."/>
            <person name="Lackner G."/>
            <person name="Kalb D."/>
            <person name="Dahse H.M."/>
            <person name="Hoffmeister D."/>
            <person name="Hertweck C."/>
        </authorList>
    </citation>
    <scope>FUNCTION</scope>
    <scope>PATHWAY</scope>
</reference>
<proteinExistence type="inferred from homology"/>
<evidence type="ECO:0000255" key="1"/>
<evidence type="ECO:0000255" key="2">
    <source>
        <dbReference type="PROSITE-ProRule" id="PRU00434"/>
    </source>
</evidence>
<evidence type="ECO:0000255" key="3">
    <source>
        <dbReference type="PROSITE-ProRule" id="PRU00441"/>
    </source>
</evidence>
<evidence type="ECO:0000255" key="4">
    <source>
        <dbReference type="PROSITE-ProRule" id="PRU00498"/>
    </source>
</evidence>
<evidence type="ECO:0000269" key="5">
    <source>
    </source>
</evidence>
<evidence type="ECO:0000303" key="6">
    <source>
    </source>
</evidence>
<evidence type="ECO:0000305" key="7"/>
<gene>
    <name evidence="6" type="primary">aclQ</name>
    <name type="ORF">AO090001000032</name>
</gene>
<comment type="function">
    <text evidence="5">ABC transporter; part of the gene cluster that mediates the biosynthesis of aspirochlorine (or antibiotic A30641), an unusual halogenated spiro compound with distinctive antifungal properties due to selective inhibition of protein biosynthesis, and which is also active against bacteria, viruses, and murine tumor cells (PubMed:25302411).</text>
</comment>
<comment type="subcellular location">
    <subcellularLocation>
        <location evidence="1">Membrane</location>
        <topology evidence="1">Multi-pass membrane protein</topology>
    </subcellularLocation>
</comment>
<comment type="similarity">
    <text evidence="7">Belongs to the ABC transporter superfamily. ABCB family. Heavy Metal importer (TC 3.A.1.210) subfamily.</text>
</comment>
<feature type="chain" id="PRO_0000441201" description="ABC transporter aclQ">
    <location>
        <begin position="1"/>
        <end position="804"/>
    </location>
</feature>
<feature type="transmembrane region" description="Helical" evidence="1">
    <location>
        <begin position="3"/>
        <end position="23"/>
    </location>
</feature>
<feature type="transmembrane region" description="Helical" evidence="1">
    <location>
        <begin position="52"/>
        <end position="72"/>
    </location>
</feature>
<feature type="transmembrane region" description="Helical" evidence="1">
    <location>
        <begin position="97"/>
        <end position="117"/>
    </location>
</feature>
<feature type="transmembrane region" description="Helical" evidence="1">
    <location>
        <begin position="119"/>
        <end position="139"/>
    </location>
</feature>
<feature type="transmembrane region" description="Helical" evidence="1">
    <location>
        <begin position="155"/>
        <end position="175"/>
    </location>
</feature>
<feature type="transmembrane region" description="Helical" evidence="1">
    <location>
        <begin position="206"/>
        <end position="226"/>
    </location>
</feature>
<feature type="transmembrane region" description="Helical" evidence="1 3">
    <location>
        <begin position="239"/>
        <end position="259"/>
    </location>
</feature>
<feature type="transmembrane region" description="Helical" evidence="1 3">
    <location>
        <begin position="349"/>
        <end position="369"/>
    </location>
</feature>
<feature type="transmembrane region" description="Helical" evidence="1 3">
    <location>
        <begin position="373"/>
        <end position="393"/>
    </location>
</feature>
<feature type="transmembrane region" description="Helical" evidence="1 3">
    <location>
        <begin position="464"/>
        <end position="484"/>
    </location>
</feature>
<feature type="transmembrane region" description="Helical" evidence="1 3">
    <location>
        <begin position="489"/>
        <end position="509"/>
    </location>
</feature>
<feature type="domain" description="ABC transmembrane type-1" evidence="3">
    <location>
        <begin position="236"/>
        <end position="518"/>
    </location>
</feature>
<feature type="domain" description="ABC transporter" evidence="2">
    <location>
        <begin position="552"/>
        <end position="786"/>
    </location>
</feature>
<feature type="binding site" evidence="2">
    <location>
        <begin position="585"/>
        <end position="592"/>
    </location>
    <ligand>
        <name>ATP</name>
        <dbReference type="ChEBI" id="CHEBI:30616"/>
    </ligand>
</feature>
<feature type="glycosylation site" description="N-linked (GlcNAc...) asparagine" evidence="4">
    <location>
        <position position="460"/>
    </location>
</feature>
<feature type="glycosylation site" description="N-linked (GlcNAc...) asparagine" evidence="4">
    <location>
        <position position="639"/>
    </location>
</feature>
<feature type="glycosylation site" description="N-linked (GlcNAc...) asparagine" evidence="4">
    <location>
        <position position="797"/>
    </location>
</feature>
<sequence>MQLAVLTLALCWAYPVTIYISYLLSRLGIALYRKHKDSTTGAWYEKHRKAAFTAIFWLQLVQCFDLAISITITGYAMNISPQVEAWWVDKEFLASNIAVFMFLAAGLLPDPDVPFSPSLSHSHAWIAGIIMEALQLAMFCNQQSPVSVLSRVEYLQLGLVMVRLVLFVAMVALYFQPMYAWSRIQLDETEPLLGEVDSKPVRDAQHGGWLDYVVGFSTLFPFLWPSDSRRLQLRAIFCFVLLVIQRVVNILVPHQLGIVVAHLGSGTIPYQKIAIYIALRALQGQQGVIGSIRALLWIPVSQSTYRRLTSSAFEHVLSLSLEFHLGKRIGEVMSALSKGSALNTFLDGLVFQLFPMVADLWIAALYFLIQFDAFYSLIVITVTWLYLFVTIYMAKYRGRARREMVNREREMEAAKTDALMSYETVHHNSAVPHEINRFNRLVQAFQKAEYFVFFSLNLLNATQNLLFTAGVAIVCLLCAYQISADMQQVAMFVTLLTYLAQLQAPLNFFGSFYTQVQNNLVDAERMLALFKEKPLVQDRDGAIDLNTCAGRVEFTHVNFAYDERRPALQDVSFTVEPGTSTAIVGESGSGKSTILKLLFRFYDVAAGSVRFDGVDARDMTIASLRSHLGVVPQDTILFNDTLLYNLLYARPQATMEEVYAACRAASIHDRIMSFPDGYETKVGERGLRLSGGEKQRIAIARTFLRSPQILLLDEATASLDSQTERQIQGALDNIAKGRTTITIAHRLSTITKANQIIVLHQGRIVEKGTHEELLAANGMYSQMWAKQTKAKEKKDSNATLVEVA</sequence>